<keyword id="KW-0963">Cytoplasm</keyword>
<keyword id="KW-0441">Lipid A biosynthesis</keyword>
<keyword id="KW-0444">Lipid biosynthesis</keyword>
<keyword id="KW-0443">Lipid metabolism</keyword>
<keyword id="KW-0456">Lyase</keyword>
<keyword id="KW-1185">Reference proteome</keyword>
<proteinExistence type="inferred from homology"/>
<feature type="chain" id="PRO_0000301887" description="3-hydroxyacyl-[acyl-carrier-protein] dehydratase FabZ">
    <location>
        <begin position="1"/>
        <end position="142"/>
    </location>
</feature>
<feature type="active site" evidence="1">
    <location>
        <position position="49"/>
    </location>
</feature>
<comment type="function">
    <text evidence="1">Involved in unsaturated fatty acids biosynthesis. Catalyzes the dehydration of short chain beta-hydroxyacyl-ACPs and long chain saturated and unsaturated beta-hydroxyacyl-ACPs.</text>
</comment>
<comment type="catalytic activity">
    <reaction evidence="1">
        <text>a (3R)-hydroxyacyl-[ACP] = a (2E)-enoyl-[ACP] + H2O</text>
        <dbReference type="Rhea" id="RHEA:13097"/>
        <dbReference type="Rhea" id="RHEA-COMP:9925"/>
        <dbReference type="Rhea" id="RHEA-COMP:9945"/>
        <dbReference type="ChEBI" id="CHEBI:15377"/>
        <dbReference type="ChEBI" id="CHEBI:78784"/>
        <dbReference type="ChEBI" id="CHEBI:78827"/>
        <dbReference type="EC" id="4.2.1.59"/>
    </reaction>
</comment>
<comment type="subcellular location">
    <subcellularLocation>
        <location evidence="1">Cytoplasm</location>
    </subcellularLocation>
</comment>
<comment type="similarity">
    <text evidence="1">Belongs to the thioester dehydratase family. FabZ subfamily.</text>
</comment>
<protein>
    <recommendedName>
        <fullName evidence="1">3-hydroxyacyl-[acyl-carrier-protein] dehydratase FabZ</fullName>
        <ecNumber evidence="1">4.2.1.59</ecNumber>
    </recommendedName>
    <alternativeName>
        <fullName evidence="1">(3R)-hydroxymyristoyl-[acyl-carrier-protein] dehydratase</fullName>
        <shortName evidence="1">(3R)-hydroxymyristoyl-ACP dehydrase</shortName>
    </alternativeName>
    <alternativeName>
        <fullName evidence="1">Beta-hydroxyacyl-ACP dehydratase</fullName>
    </alternativeName>
</protein>
<name>FABZ_CLONN</name>
<gene>
    <name evidence="1" type="primary">fabZ</name>
    <name type="ordered locus">NT01CX_0928</name>
</gene>
<accession>A0PXC3</accession>
<organism>
    <name type="scientific">Clostridium novyi (strain NT)</name>
    <dbReference type="NCBI Taxonomy" id="386415"/>
    <lineage>
        <taxon>Bacteria</taxon>
        <taxon>Bacillati</taxon>
        <taxon>Bacillota</taxon>
        <taxon>Clostridia</taxon>
        <taxon>Eubacteriales</taxon>
        <taxon>Clostridiaceae</taxon>
        <taxon>Clostridium</taxon>
    </lineage>
</organism>
<reference key="1">
    <citation type="journal article" date="2006" name="Nat. Biotechnol.">
        <title>The genome and transcriptomes of the anti-tumor agent Clostridium novyi-NT.</title>
        <authorList>
            <person name="Bettegowda C."/>
            <person name="Huang X."/>
            <person name="Lin J."/>
            <person name="Cheong I."/>
            <person name="Kohli M."/>
            <person name="Szabo S.A."/>
            <person name="Zhang X."/>
            <person name="Diaz L.A. Jr."/>
            <person name="Velculescu V.E."/>
            <person name="Parmigiani G."/>
            <person name="Kinzler K.W."/>
            <person name="Vogelstein B."/>
            <person name="Zhou S."/>
        </authorList>
    </citation>
    <scope>NUCLEOTIDE SEQUENCE [LARGE SCALE GENOMIC DNA]</scope>
    <source>
        <strain>NT</strain>
    </source>
</reference>
<sequence length="142" mass="15663">MALGIKEIQEIIPHRYPFLLVDKVEELEPGKRAVGYKNVTMNEYFFQGHFPEEPVMPGVLQIEALAQLGAIALLSMDEFKGKIAYFGGINKAKFRRKVVPGDVLKLEIEIVKMKGPAGIGKAIATVDGEKAVECEIMFAVGK</sequence>
<dbReference type="EC" id="4.2.1.59" evidence="1"/>
<dbReference type="EMBL" id="CP000382">
    <property type="protein sequence ID" value="ABK60554.1"/>
    <property type="molecule type" value="Genomic_DNA"/>
</dbReference>
<dbReference type="RefSeq" id="WP_011721046.1">
    <property type="nucleotide sequence ID" value="NC_008593.1"/>
</dbReference>
<dbReference type="SMR" id="A0PXC3"/>
<dbReference type="STRING" id="386415.NT01CX_0928"/>
<dbReference type="KEGG" id="cno:NT01CX_0928"/>
<dbReference type="eggNOG" id="COG0764">
    <property type="taxonomic scope" value="Bacteria"/>
</dbReference>
<dbReference type="HOGENOM" id="CLU_078912_3_0_9"/>
<dbReference type="Proteomes" id="UP000008220">
    <property type="component" value="Chromosome"/>
</dbReference>
<dbReference type="GO" id="GO:0005737">
    <property type="term" value="C:cytoplasm"/>
    <property type="evidence" value="ECO:0007669"/>
    <property type="project" value="UniProtKB-SubCell"/>
</dbReference>
<dbReference type="GO" id="GO:0016020">
    <property type="term" value="C:membrane"/>
    <property type="evidence" value="ECO:0007669"/>
    <property type="project" value="GOC"/>
</dbReference>
<dbReference type="GO" id="GO:0019171">
    <property type="term" value="F:(3R)-hydroxyacyl-[acyl-carrier-protein] dehydratase activity"/>
    <property type="evidence" value="ECO:0007669"/>
    <property type="project" value="UniProtKB-EC"/>
</dbReference>
<dbReference type="GO" id="GO:0006633">
    <property type="term" value="P:fatty acid biosynthetic process"/>
    <property type="evidence" value="ECO:0007669"/>
    <property type="project" value="UniProtKB-UniRule"/>
</dbReference>
<dbReference type="GO" id="GO:0009245">
    <property type="term" value="P:lipid A biosynthetic process"/>
    <property type="evidence" value="ECO:0007669"/>
    <property type="project" value="UniProtKB-UniRule"/>
</dbReference>
<dbReference type="CDD" id="cd01288">
    <property type="entry name" value="FabZ"/>
    <property type="match status" value="1"/>
</dbReference>
<dbReference type="FunFam" id="3.10.129.10:FF:000001">
    <property type="entry name" value="3-hydroxyacyl-[acyl-carrier-protein] dehydratase FabZ"/>
    <property type="match status" value="1"/>
</dbReference>
<dbReference type="Gene3D" id="3.10.129.10">
    <property type="entry name" value="Hotdog Thioesterase"/>
    <property type="match status" value="1"/>
</dbReference>
<dbReference type="HAMAP" id="MF_00406">
    <property type="entry name" value="FabZ"/>
    <property type="match status" value="1"/>
</dbReference>
<dbReference type="InterPro" id="IPR013114">
    <property type="entry name" value="FabA_FabZ"/>
</dbReference>
<dbReference type="InterPro" id="IPR010084">
    <property type="entry name" value="FabZ"/>
</dbReference>
<dbReference type="InterPro" id="IPR029069">
    <property type="entry name" value="HotDog_dom_sf"/>
</dbReference>
<dbReference type="NCBIfam" id="TIGR01750">
    <property type="entry name" value="fabZ"/>
    <property type="match status" value="1"/>
</dbReference>
<dbReference type="NCBIfam" id="NF000582">
    <property type="entry name" value="PRK00006.1"/>
    <property type="match status" value="1"/>
</dbReference>
<dbReference type="PANTHER" id="PTHR30272">
    <property type="entry name" value="3-HYDROXYACYL-[ACYL-CARRIER-PROTEIN] DEHYDRATASE"/>
    <property type="match status" value="1"/>
</dbReference>
<dbReference type="PANTHER" id="PTHR30272:SF1">
    <property type="entry name" value="3-HYDROXYACYL-[ACYL-CARRIER-PROTEIN] DEHYDRATASE"/>
    <property type="match status" value="1"/>
</dbReference>
<dbReference type="Pfam" id="PF07977">
    <property type="entry name" value="FabA"/>
    <property type="match status" value="1"/>
</dbReference>
<dbReference type="SUPFAM" id="SSF54637">
    <property type="entry name" value="Thioesterase/thiol ester dehydrase-isomerase"/>
    <property type="match status" value="1"/>
</dbReference>
<evidence type="ECO:0000255" key="1">
    <source>
        <dbReference type="HAMAP-Rule" id="MF_00406"/>
    </source>
</evidence>